<evidence type="ECO:0000255" key="1">
    <source>
        <dbReference type="HAMAP-Rule" id="MF_01337"/>
    </source>
</evidence>
<evidence type="ECO:0000256" key="2">
    <source>
        <dbReference type="SAM" id="MobiDB-lite"/>
    </source>
</evidence>
<evidence type="ECO:0000305" key="3"/>
<organism>
    <name type="scientific">Acaryochloris marina (strain MBIC 11017)</name>
    <dbReference type="NCBI Taxonomy" id="329726"/>
    <lineage>
        <taxon>Bacteria</taxon>
        <taxon>Bacillati</taxon>
        <taxon>Cyanobacteriota</taxon>
        <taxon>Cyanophyceae</taxon>
        <taxon>Acaryochloridales</taxon>
        <taxon>Acaryochloridaceae</taxon>
        <taxon>Acaryochloris</taxon>
    </lineage>
</organism>
<keyword id="KW-1185">Reference proteome</keyword>
<keyword id="KW-0687">Ribonucleoprotein</keyword>
<keyword id="KW-0689">Ribosomal protein</keyword>
<keyword id="KW-0694">RNA-binding</keyword>
<keyword id="KW-0699">rRNA-binding</keyword>
<dbReference type="EMBL" id="CP000828">
    <property type="protein sequence ID" value="ABW29683.1"/>
    <property type="molecule type" value="Genomic_DNA"/>
</dbReference>
<dbReference type="RefSeq" id="WP_012164970.1">
    <property type="nucleotide sequence ID" value="NC_009925.1"/>
</dbReference>
<dbReference type="SMR" id="B0C1E8"/>
<dbReference type="STRING" id="329726.AM1_4711"/>
<dbReference type="KEGG" id="amr:AM1_4711"/>
<dbReference type="eggNOG" id="COG0256">
    <property type="taxonomic scope" value="Bacteria"/>
</dbReference>
<dbReference type="HOGENOM" id="CLU_098841_0_1_3"/>
<dbReference type="OrthoDB" id="9810939at2"/>
<dbReference type="Proteomes" id="UP000000268">
    <property type="component" value="Chromosome"/>
</dbReference>
<dbReference type="GO" id="GO:0022625">
    <property type="term" value="C:cytosolic large ribosomal subunit"/>
    <property type="evidence" value="ECO:0007669"/>
    <property type="project" value="TreeGrafter"/>
</dbReference>
<dbReference type="GO" id="GO:0008097">
    <property type="term" value="F:5S rRNA binding"/>
    <property type="evidence" value="ECO:0007669"/>
    <property type="project" value="TreeGrafter"/>
</dbReference>
<dbReference type="GO" id="GO:0003735">
    <property type="term" value="F:structural constituent of ribosome"/>
    <property type="evidence" value="ECO:0007669"/>
    <property type="project" value="InterPro"/>
</dbReference>
<dbReference type="GO" id="GO:0006412">
    <property type="term" value="P:translation"/>
    <property type="evidence" value="ECO:0007669"/>
    <property type="project" value="UniProtKB-UniRule"/>
</dbReference>
<dbReference type="CDD" id="cd00432">
    <property type="entry name" value="Ribosomal_L18_L5e"/>
    <property type="match status" value="1"/>
</dbReference>
<dbReference type="FunFam" id="3.30.420.100:FF:000001">
    <property type="entry name" value="50S ribosomal protein L18"/>
    <property type="match status" value="1"/>
</dbReference>
<dbReference type="Gene3D" id="3.30.420.100">
    <property type="match status" value="1"/>
</dbReference>
<dbReference type="HAMAP" id="MF_01337_B">
    <property type="entry name" value="Ribosomal_uL18_B"/>
    <property type="match status" value="1"/>
</dbReference>
<dbReference type="InterPro" id="IPR004389">
    <property type="entry name" value="Ribosomal_uL18_bac-type"/>
</dbReference>
<dbReference type="InterPro" id="IPR005484">
    <property type="entry name" value="Ribosomal_uL18_bac/euk"/>
</dbReference>
<dbReference type="NCBIfam" id="TIGR00060">
    <property type="entry name" value="L18_bact"/>
    <property type="match status" value="1"/>
</dbReference>
<dbReference type="PANTHER" id="PTHR12899">
    <property type="entry name" value="39S RIBOSOMAL PROTEIN L18, MITOCHONDRIAL"/>
    <property type="match status" value="1"/>
</dbReference>
<dbReference type="PANTHER" id="PTHR12899:SF3">
    <property type="entry name" value="LARGE RIBOSOMAL SUBUNIT PROTEIN UL18M"/>
    <property type="match status" value="1"/>
</dbReference>
<dbReference type="Pfam" id="PF00861">
    <property type="entry name" value="Ribosomal_L18p"/>
    <property type="match status" value="1"/>
</dbReference>
<dbReference type="SUPFAM" id="SSF53137">
    <property type="entry name" value="Translational machinery components"/>
    <property type="match status" value="1"/>
</dbReference>
<accession>B0C1E8</accession>
<protein>
    <recommendedName>
        <fullName evidence="1">Large ribosomal subunit protein uL18</fullName>
    </recommendedName>
    <alternativeName>
        <fullName evidence="3">50S ribosomal protein L18</fullName>
    </alternativeName>
</protein>
<sequence>MKTTRRDATRSRHQRVRRKVVGTAERPRLAVFRSNQHIYAQVIDDAQQHTLAAASTVESDLKSSSGATCDASTAVGKLVAERAIEKGIKAVVFDRGGNLYHGRVKALADAAREAGLEF</sequence>
<comment type="function">
    <text evidence="1">This is one of the proteins that bind and probably mediate the attachment of the 5S RNA into the large ribosomal subunit, where it forms part of the central protuberance.</text>
</comment>
<comment type="subunit">
    <text evidence="1">Part of the 50S ribosomal subunit; part of the 5S rRNA/L5/L18/L25 subcomplex. Contacts the 5S and 23S rRNAs.</text>
</comment>
<comment type="similarity">
    <text evidence="1">Belongs to the universal ribosomal protein uL18 family.</text>
</comment>
<gene>
    <name evidence="1" type="primary">rplR</name>
    <name evidence="1" type="synonym">rpl18</name>
    <name type="ordered locus">AM1_4711</name>
</gene>
<proteinExistence type="inferred from homology"/>
<reference key="1">
    <citation type="journal article" date="2008" name="Proc. Natl. Acad. Sci. U.S.A.">
        <title>Niche adaptation and genome expansion in the chlorophyll d-producing cyanobacterium Acaryochloris marina.</title>
        <authorList>
            <person name="Swingley W.D."/>
            <person name="Chen M."/>
            <person name="Cheung P.C."/>
            <person name="Conrad A.L."/>
            <person name="Dejesa L.C."/>
            <person name="Hao J."/>
            <person name="Honchak B.M."/>
            <person name="Karbach L.E."/>
            <person name="Kurdoglu A."/>
            <person name="Lahiri S."/>
            <person name="Mastrian S.D."/>
            <person name="Miyashita H."/>
            <person name="Page L."/>
            <person name="Ramakrishna P."/>
            <person name="Satoh S."/>
            <person name="Sattley W.M."/>
            <person name="Shimada Y."/>
            <person name="Taylor H.L."/>
            <person name="Tomo T."/>
            <person name="Tsuchiya T."/>
            <person name="Wang Z.T."/>
            <person name="Raymond J."/>
            <person name="Mimuro M."/>
            <person name="Blankenship R.E."/>
            <person name="Touchman J.W."/>
        </authorList>
    </citation>
    <scope>NUCLEOTIDE SEQUENCE [LARGE SCALE GENOMIC DNA]</scope>
    <source>
        <strain>MBIC 11017</strain>
    </source>
</reference>
<name>RL18_ACAM1</name>
<feature type="chain" id="PRO_1000086647" description="Large ribosomal subunit protein uL18">
    <location>
        <begin position="1"/>
        <end position="118"/>
    </location>
</feature>
<feature type="region of interest" description="Disordered" evidence="2">
    <location>
        <begin position="1"/>
        <end position="20"/>
    </location>
</feature>
<feature type="compositionally biased region" description="Basic and acidic residues" evidence="2">
    <location>
        <begin position="1"/>
        <end position="10"/>
    </location>
</feature>
<feature type="compositionally biased region" description="Basic residues" evidence="2">
    <location>
        <begin position="11"/>
        <end position="20"/>
    </location>
</feature>